<feature type="chain" id="PRO_0000155611" description="Probable metallophosphoesterase MJ0623">
    <location>
        <begin position="1"/>
        <end position="192"/>
    </location>
</feature>
<feature type="binding site" evidence="1">
    <location>
        <position position="41"/>
    </location>
    <ligand>
        <name>a divalent metal cation</name>
        <dbReference type="ChEBI" id="CHEBI:60240"/>
        <label>1</label>
    </ligand>
</feature>
<feature type="binding site" evidence="1">
    <location>
        <position position="43"/>
    </location>
    <ligand>
        <name>a divalent metal cation</name>
        <dbReference type="ChEBI" id="CHEBI:60240"/>
        <label>1</label>
    </ligand>
</feature>
<feature type="binding site" evidence="1">
    <location>
        <position position="70"/>
    </location>
    <ligand>
        <name>a divalent metal cation</name>
        <dbReference type="ChEBI" id="CHEBI:60240"/>
        <label>1</label>
    </ligand>
</feature>
<feature type="binding site" evidence="1">
    <location>
        <position position="70"/>
    </location>
    <ligand>
        <name>a divalent metal cation</name>
        <dbReference type="ChEBI" id="CHEBI:60240"/>
        <label>2</label>
    </ligand>
</feature>
<feature type="binding site" evidence="1">
    <location>
        <position position="92"/>
    </location>
    <ligand>
        <name>a divalent metal cation</name>
        <dbReference type="ChEBI" id="CHEBI:60240"/>
        <label>2</label>
    </ligand>
</feature>
<feature type="binding site" evidence="1">
    <location>
        <position position="115"/>
    </location>
    <ligand>
        <name>a divalent metal cation</name>
        <dbReference type="ChEBI" id="CHEBI:60240"/>
        <label>2</label>
    </ligand>
</feature>
<feature type="binding site" evidence="1">
    <location>
        <position position="144"/>
    </location>
    <ligand>
        <name>a divalent metal cation</name>
        <dbReference type="ChEBI" id="CHEBI:60240"/>
        <label>2</label>
    </ligand>
</feature>
<feature type="binding site" evidence="1">
    <location>
        <position position="146"/>
    </location>
    <ligand>
        <name>a divalent metal cation</name>
        <dbReference type="ChEBI" id="CHEBI:60240"/>
        <label>1</label>
    </ligand>
</feature>
<protein>
    <recommendedName>
        <fullName evidence="2">Probable metallophosphoesterase MJ0623</fullName>
        <ecNumber evidence="1">3.1.4.-</ecNumber>
    </recommendedName>
</protein>
<evidence type="ECO:0000250" key="1">
    <source>
        <dbReference type="UniProtKB" id="Q58346"/>
    </source>
</evidence>
<evidence type="ECO:0000305" key="2"/>
<organism>
    <name type="scientific">Methanocaldococcus jannaschii (strain ATCC 43067 / DSM 2661 / JAL-1 / JCM 10045 / NBRC 100440)</name>
    <name type="common">Methanococcus jannaschii</name>
    <dbReference type="NCBI Taxonomy" id="243232"/>
    <lineage>
        <taxon>Archaea</taxon>
        <taxon>Methanobacteriati</taxon>
        <taxon>Methanobacteriota</taxon>
        <taxon>Methanomada group</taxon>
        <taxon>Methanococci</taxon>
        <taxon>Methanococcales</taxon>
        <taxon>Methanocaldococcaceae</taxon>
        <taxon>Methanocaldococcus</taxon>
    </lineage>
</organism>
<keyword id="KW-0378">Hydrolase</keyword>
<keyword id="KW-0479">Metal-binding</keyword>
<keyword id="KW-1185">Reference proteome</keyword>
<proteinExistence type="inferred from homology"/>
<name>Y623_METJA</name>
<gene>
    <name type="ordered locus">MJ0623</name>
</gene>
<sequence>MRDGEGIWGRGRTGGHAHPKEAMHTTFFILGGTMLIGVISDTHLYDRAFELPKAVFDEFSNVDLIIHCGDVTDKEILDSLKDLAKVVAVKGNMDYLNLPRKEILEINDIKIGVIHGDVVYPRGDRLKLRLLGKEMGVDVLISGHTHTPFIDDCRDILLLNPGSPTVPRCPLKSIMKLSVEDKLEAKLIPIEE</sequence>
<accession>Q58040</accession>
<reference key="1">
    <citation type="journal article" date="1996" name="Science">
        <title>Complete genome sequence of the methanogenic archaeon, Methanococcus jannaschii.</title>
        <authorList>
            <person name="Bult C.J."/>
            <person name="White O."/>
            <person name="Olsen G.J."/>
            <person name="Zhou L."/>
            <person name="Fleischmann R.D."/>
            <person name="Sutton G.G."/>
            <person name="Blake J.A."/>
            <person name="FitzGerald L.M."/>
            <person name="Clayton R.A."/>
            <person name="Gocayne J.D."/>
            <person name="Kerlavage A.R."/>
            <person name="Dougherty B.A."/>
            <person name="Tomb J.-F."/>
            <person name="Adams M.D."/>
            <person name="Reich C.I."/>
            <person name="Overbeek R."/>
            <person name="Kirkness E.F."/>
            <person name="Weinstock K.G."/>
            <person name="Merrick J.M."/>
            <person name="Glodek A."/>
            <person name="Scott J.L."/>
            <person name="Geoghagen N.S.M."/>
            <person name="Weidman J.F."/>
            <person name="Fuhrmann J.L."/>
            <person name="Nguyen D."/>
            <person name="Utterback T.R."/>
            <person name="Kelley J.M."/>
            <person name="Peterson J.D."/>
            <person name="Sadow P.W."/>
            <person name="Hanna M.C."/>
            <person name="Cotton M.D."/>
            <person name="Roberts K.M."/>
            <person name="Hurst M.A."/>
            <person name="Kaine B.P."/>
            <person name="Borodovsky M."/>
            <person name="Klenk H.-P."/>
            <person name="Fraser C.M."/>
            <person name="Smith H.O."/>
            <person name="Woese C.R."/>
            <person name="Venter J.C."/>
        </authorList>
    </citation>
    <scope>NUCLEOTIDE SEQUENCE [LARGE SCALE GENOMIC DNA]</scope>
    <source>
        <strain>ATCC 43067 / DSM 2661 / JAL-1 / JCM 10045 / NBRC 100440</strain>
    </source>
</reference>
<comment type="cofactor">
    <cofactor evidence="1">
        <name>a divalent metal cation</name>
        <dbReference type="ChEBI" id="CHEBI:60240"/>
    </cofactor>
    <text evidence="1">Binds 2 divalent metal ions per subunit.</text>
</comment>
<comment type="similarity">
    <text evidence="2">Belongs to the metallophosphoesterase superfamily. YfcE family.</text>
</comment>
<dbReference type="EC" id="3.1.4.-" evidence="1"/>
<dbReference type="EMBL" id="L77117">
    <property type="protein sequence ID" value="AAB98618.1"/>
    <property type="molecule type" value="Genomic_DNA"/>
</dbReference>
<dbReference type="PIR" id="G64377">
    <property type="entry name" value="G64377"/>
</dbReference>
<dbReference type="SMR" id="Q58040"/>
<dbReference type="FunCoup" id="Q58040">
    <property type="interactions" value="113"/>
</dbReference>
<dbReference type="STRING" id="243232.MJ_0623"/>
<dbReference type="PaxDb" id="243232-MJ_0623"/>
<dbReference type="EnsemblBacteria" id="AAB98618">
    <property type="protein sequence ID" value="AAB98618"/>
    <property type="gene ID" value="MJ_0623"/>
</dbReference>
<dbReference type="KEGG" id="mja:MJ_0623"/>
<dbReference type="eggNOG" id="arCOG01141">
    <property type="taxonomic scope" value="Archaea"/>
</dbReference>
<dbReference type="HOGENOM" id="CLU_063749_3_2_2"/>
<dbReference type="InParanoid" id="Q58040"/>
<dbReference type="PhylomeDB" id="Q58040"/>
<dbReference type="Proteomes" id="UP000000805">
    <property type="component" value="Chromosome"/>
</dbReference>
<dbReference type="GO" id="GO:0016787">
    <property type="term" value="F:hydrolase activity"/>
    <property type="evidence" value="ECO:0007669"/>
    <property type="project" value="UniProtKB-KW"/>
</dbReference>
<dbReference type="GO" id="GO:0046872">
    <property type="term" value="F:metal ion binding"/>
    <property type="evidence" value="ECO:0007669"/>
    <property type="project" value="UniProtKB-KW"/>
</dbReference>
<dbReference type="CDD" id="cd00841">
    <property type="entry name" value="MPP_YfcE"/>
    <property type="match status" value="1"/>
</dbReference>
<dbReference type="Gene3D" id="3.60.21.10">
    <property type="match status" value="1"/>
</dbReference>
<dbReference type="InterPro" id="IPR024654">
    <property type="entry name" value="Calcineurin-like_PHP_lpxH"/>
</dbReference>
<dbReference type="InterPro" id="IPR029052">
    <property type="entry name" value="Metallo-depent_PP-like"/>
</dbReference>
<dbReference type="InterPro" id="IPR041802">
    <property type="entry name" value="MPP_YfcE"/>
</dbReference>
<dbReference type="InterPro" id="IPR020935">
    <property type="entry name" value="PdiEstase_YfcE_CS"/>
</dbReference>
<dbReference type="InterPro" id="IPR000979">
    <property type="entry name" value="Phosphodiesterase_MJ0936/Vps29"/>
</dbReference>
<dbReference type="NCBIfam" id="TIGR00040">
    <property type="entry name" value="yfcE"/>
    <property type="match status" value="1"/>
</dbReference>
<dbReference type="PANTHER" id="PTHR11124">
    <property type="entry name" value="VACUOLAR SORTING PROTEIN VPS29"/>
    <property type="match status" value="1"/>
</dbReference>
<dbReference type="Pfam" id="PF12850">
    <property type="entry name" value="Metallophos_2"/>
    <property type="match status" value="1"/>
</dbReference>
<dbReference type="SUPFAM" id="SSF56300">
    <property type="entry name" value="Metallo-dependent phosphatases"/>
    <property type="match status" value="1"/>
</dbReference>
<dbReference type="PROSITE" id="PS01269">
    <property type="entry name" value="UPF0025"/>
    <property type="match status" value="1"/>
</dbReference>